<accession>A8ERB8</accession>
<organism>
    <name type="scientific">Aliarcobacter butzleri (strain RM4018)</name>
    <name type="common">Arcobacter butzleri</name>
    <dbReference type="NCBI Taxonomy" id="367737"/>
    <lineage>
        <taxon>Bacteria</taxon>
        <taxon>Pseudomonadati</taxon>
        <taxon>Campylobacterota</taxon>
        <taxon>Epsilonproteobacteria</taxon>
        <taxon>Campylobacterales</taxon>
        <taxon>Arcobacteraceae</taxon>
        <taxon>Aliarcobacter</taxon>
    </lineage>
</organism>
<proteinExistence type="inferred from homology"/>
<sequence>MQVLKTIEELQNIRKNSLGKVGLVPTMGALHNGHISLIKQARNENDIVIVSIFVNPTQFLPGEDLDAYPRRDEADKKICQMCKVNYVFMPEISTMYTKEEVLVKAPNKSYILEGKTRPGHFDGVLQVVLKLFNLTQPTNAYFGKKDAQQLTLIQQMVKNFFLPINIVPCDIVREEDGLALSSRNIYLNPTQRKDALLISKSLYMAGSLISSGERSVKAVKDKIYEVMSILDVEYVAIVDKEFNELETIEPTNTIILVVARFGNTRLLDNIWL</sequence>
<feature type="chain" id="PRO_1000076837" description="Pantothenate synthetase">
    <location>
        <begin position="1"/>
        <end position="272"/>
    </location>
</feature>
<feature type="active site" description="Proton donor" evidence="1">
    <location>
        <position position="34"/>
    </location>
</feature>
<feature type="binding site" evidence="1">
    <location>
        <begin position="27"/>
        <end position="34"/>
    </location>
    <ligand>
        <name>ATP</name>
        <dbReference type="ChEBI" id="CHEBI:30616"/>
    </ligand>
</feature>
<feature type="binding site" evidence="1">
    <location>
        <position position="58"/>
    </location>
    <ligand>
        <name>(R)-pantoate</name>
        <dbReference type="ChEBI" id="CHEBI:15980"/>
    </ligand>
</feature>
<feature type="binding site" evidence="1">
    <location>
        <position position="58"/>
    </location>
    <ligand>
        <name>beta-alanine</name>
        <dbReference type="ChEBI" id="CHEBI:57966"/>
    </ligand>
</feature>
<feature type="binding site" evidence="1">
    <location>
        <begin position="143"/>
        <end position="146"/>
    </location>
    <ligand>
        <name>ATP</name>
        <dbReference type="ChEBI" id="CHEBI:30616"/>
    </ligand>
</feature>
<feature type="binding site" evidence="1">
    <location>
        <position position="149"/>
    </location>
    <ligand>
        <name>(R)-pantoate</name>
        <dbReference type="ChEBI" id="CHEBI:15980"/>
    </ligand>
</feature>
<feature type="binding site" evidence="1">
    <location>
        <position position="172"/>
    </location>
    <ligand>
        <name>ATP</name>
        <dbReference type="ChEBI" id="CHEBI:30616"/>
    </ligand>
</feature>
<feature type="binding site" evidence="1">
    <location>
        <begin position="180"/>
        <end position="183"/>
    </location>
    <ligand>
        <name>ATP</name>
        <dbReference type="ChEBI" id="CHEBI:30616"/>
    </ligand>
</feature>
<dbReference type="EC" id="6.3.2.1" evidence="1"/>
<dbReference type="EMBL" id="CP000361">
    <property type="protein sequence ID" value="ABV66492.1"/>
    <property type="molecule type" value="Genomic_DNA"/>
</dbReference>
<dbReference type="RefSeq" id="WP_012012086.1">
    <property type="nucleotide sequence ID" value="NC_009850.1"/>
</dbReference>
<dbReference type="SMR" id="A8ERB8"/>
<dbReference type="STRING" id="367737.Abu_0215"/>
<dbReference type="GeneID" id="24303883"/>
<dbReference type="KEGG" id="abu:Abu_0215"/>
<dbReference type="eggNOG" id="COG0414">
    <property type="taxonomic scope" value="Bacteria"/>
</dbReference>
<dbReference type="HOGENOM" id="CLU_047148_0_0_7"/>
<dbReference type="UniPathway" id="UPA00028">
    <property type="reaction ID" value="UER00005"/>
</dbReference>
<dbReference type="Proteomes" id="UP000001136">
    <property type="component" value="Chromosome"/>
</dbReference>
<dbReference type="GO" id="GO:0005829">
    <property type="term" value="C:cytosol"/>
    <property type="evidence" value="ECO:0007669"/>
    <property type="project" value="TreeGrafter"/>
</dbReference>
<dbReference type="GO" id="GO:0005524">
    <property type="term" value="F:ATP binding"/>
    <property type="evidence" value="ECO:0007669"/>
    <property type="project" value="UniProtKB-KW"/>
</dbReference>
<dbReference type="GO" id="GO:0004592">
    <property type="term" value="F:pantoate-beta-alanine ligase activity"/>
    <property type="evidence" value="ECO:0007669"/>
    <property type="project" value="UniProtKB-UniRule"/>
</dbReference>
<dbReference type="GO" id="GO:0015940">
    <property type="term" value="P:pantothenate biosynthetic process"/>
    <property type="evidence" value="ECO:0007669"/>
    <property type="project" value="UniProtKB-UniRule"/>
</dbReference>
<dbReference type="CDD" id="cd00560">
    <property type="entry name" value="PanC"/>
    <property type="match status" value="1"/>
</dbReference>
<dbReference type="Gene3D" id="3.40.50.620">
    <property type="entry name" value="HUPs"/>
    <property type="match status" value="1"/>
</dbReference>
<dbReference type="Gene3D" id="3.30.1300.10">
    <property type="entry name" value="Pantoate-beta-alanine ligase, C-terminal domain"/>
    <property type="match status" value="1"/>
</dbReference>
<dbReference type="HAMAP" id="MF_00158">
    <property type="entry name" value="PanC"/>
    <property type="match status" value="1"/>
</dbReference>
<dbReference type="InterPro" id="IPR004821">
    <property type="entry name" value="Cyt_trans-like"/>
</dbReference>
<dbReference type="InterPro" id="IPR003721">
    <property type="entry name" value="Pantoate_ligase"/>
</dbReference>
<dbReference type="InterPro" id="IPR042176">
    <property type="entry name" value="Pantoate_ligase_C"/>
</dbReference>
<dbReference type="InterPro" id="IPR014729">
    <property type="entry name" value="Rossmann-like_a/b/a_fold"/>
</dbReference>
<dbReference type="NCBIfam" id="TIGR00125">
    <property type="entry name" value="cyt_tran_rel"/>
    <property type="match status" value="1"/>
</dbReference>
<dbReference type="NCBIfam" id="TIGR00018">
    <property type="entry name" value="panC"/>
    <property type="match status" value="1"/>
</dbReference>
<dbReference type="PANTHER" id="PTHR21299">
    <property type="entry name" value="CYTIDYLATE KINASE/PANTOATE-BETA-ALANINE LIGASE"/>
    <property type="match status" value="1"/>
</dbReference>
<dbReference type="PANTHER" id="PTHR21299:SF1">
    <property type="entry name" value="PANTOATE--BETA-ALANINE LIGASE"/>
    <property type="match status" value="1"/>
</dbReference>
<dbReference type="Pfam" id="PF02569">
    <property type="entry name" value="Pantoate_ligase"/>
    <property type="match status" value="1"/>
</dbReference>
<dbReference type="SUPFAM" id="SSF52374">
    <property type="entry name" value="Nucleotidylyl transferase"/>
    <property type="match status" value="1"/>
</dbReference>
<keyword id="KW-0067">ATP-binding</keyword>
<keyword id="KW-0963">Cytoplasm</keyword>
<keyword id="KW-0436">Ligase</keyword>
<keyword id="KW-0547">Nucleotide-binding</keyword>
<keyword id="KW-0566">Pantothenate biosynthesis</keyword>
<keyword id="KW-1185">Reference proteome</keyword>
<gene>
    <name evidence="1" type="primary">panC</name>
    <name type="ordered locus">Abu_0215</name>
</gene>
<comment type="function">
    <text evidence="1">Catalyzes the condensation of pantoate with beta-alanine in an ATP-dependent reaction via a pantoyl-adenylate intermediate.</text>
</comment>
<comment type="catalytic activity">
    <reaction evidence="1">
        <text>(R)-pantoate + beta-alanine + ATP = (R)-pantothenate + AMP + diphosphate + H(+)</text>
        <dbReference type="Rhea" id="RHEA:10912"/>
        <dbReference type="ChEBI" id="CHEBI:15378"/>
        <dbReference type="ChEBI" id="CHEBI:15980"/>
        <dbReference type="ChEBI" id="CHEBI:29032"/>
        <dbReference type="ChEBI" id="CHEBI:30616"/>
        <dbReference type="ChEBI" id="CHEBI:33019"/>
        <dbReference type="ChEBI" id="CHEBI:57966"/>
        <dbReference type="ChEBI" id="CHEBI:456215"/>
        <dbReference type="EC" id="6.3.2.1"/>
    </reaction>
</comment>
<comment type="pathway">
    <text evidence="1">Cofactor biosynthesis; (R)-pantothenate biosynthesis; (R)-pantothenate from (R)-pantoate and beta-alanine: step 1/1.</text>
</comment>
<comment type="subunit">
    <text evidence="1">Homodimer.</text>
</comment>
<comment type="subcellular location">
    <subcellularLocation>
        <location evidence="1">Cytoplasm</location>
    </subcellularLocation>
</comment>
<comment type="miscellaneous">
    <text evidence="1">The reaction proceeds by a bi uni uni bi ping pong mechanism.</text>
</comment>
<comment type="similarity">
    <text evidence="1">Belongs to the pantothenate synthetase family.</text>
</comment>
<name>PANC_ALIB4</name>
<protein>
    <recommendedName>
        <fullName evidence="1">Pantothenate synthetase</fullName>
        <shortName evidence="1">PS</shortName>
        <ecNumber evidence="1">6.3.2.1</ecNumber>
    </recommendedName>
    <alternativeName>
        <fullName evidence="1">Pantoate--beta-alanine ligase</fullName>
    </alternativeName>
    <alternativeName>
        <fullName evidence="1">Pantoate-activating enzyme</fullName>
    </alternativeName>
</protein>
<reference key="1">
    <citation type="journal article" date="2007" name="PLoS ONE">
        <title>The complete genome sequence and analysis of the Epsilonproteobacterium Arcobacter butzleri.</title>
        <authorList>
            <person name="Miller W.G."/>
            <person name="Parker C.T."/>
            <person name="Rubenfield M."/>
            <person name="Mendz G.L."/>
            <person name="Woesten M.M.S.M."/>
            <person name="Ussery D.W."/>
            <person name="Stolz J.F."/>
            <person name="Binnewies T.T."/>
            <person name="Hallin P.F."/>
            <person name="Wang G."/>
            <person name="Malek J.A."/>
            <person name="Rogosin A."/>
            <person name="Stanker L.H."/>
            <person name="Mandrell R.E."/>
        </authorList>
    </citation>
    <scope>NUCLEOTIDE SEQUENCE [LARGE SCALE GENOMIC DNA]</scope>
    <source>
        <strain>RM4018</strain>
    </source>
</reference>
<evidence type="ECO:0000255" key="1">
    <source>
        <dbReference type="HAMAP-Rule" id="MF_00158"/>
    </source>
</evidence>